<accession>Q5DU09</accession>
<accession>A2A617</accession>
<accession>Q7TNT4</accession>
<protein>
    <recommendedName>
        <fullName>Zinc finger protein 652</fullName>
    </recommendedName>
</protein>
<organism>
    <name type="scientific">Mus musculus</name>
    <name type="common">Mouse</name>
    <dbReference type="NCBI Taxonomy" id="10090"/>
    <lineage>
        <taxon>Eukaryota</taxon>
        <taxon>Metazoa</taxon>
        <taxon>Chordata</taxon>
        <taxon>Craniata</taxon>
        <taxon>Vertebrata</taxon>
        <taxon>Euteleostomi</taxon>
        <taxon>Mammalia</taxon>
        <taxon>Eutheria</taxon>
        <taxon>Euarchontoglires</taxon>
        <taxon>Glires</taxon>
        <taxon>Rodentia</taxon>
        <taxon>Myomorpha</taxon>
        <taxon>Muroidea</taxon>
        <taxon>Muridae</taxon>
        <taxon>Murinae</taxon>
        <taxon>Mus</taxon>
        <taxon>Mus</taxon>
    </lineage>
</organism>
<proteinExistence type="evidence at protein level"/>
<sequence length="608" mass="69441">MSYTASPCPELVEPCAVHAEGMAQEESHRSQAPPTFYHGASQELDLSTKVYKRESGSPYSVLADTKMSKPHLHETEEQPYFREPRAVSDVHTVKEDRENSDDTEEEEEVSYKREQIIVEVNLNNQTLNVSKGEKGVSSQSKETPVLKTSSEEDEEETEEEATDNSSDYGENGRQKKKEKQVERVRVTQRRTRRAASAAAATTSPAPRTTRGRRKSAELPKRKKRATKEAKAPVQKAKCEEKETLTCEKCPRVFNTRWYLEKHMNVTHRRMQICDKCGKKFVLESELSLHQQTDCEKNIQCVSCNKSFKKLWSLHEHIKIVHGYAEKKFACEICEKKFYTMAHVRKHMVAHTKDMPFTCETCGKSFKRSMSLKVHSLQHSGEKPFRCENCDERFQYKYQLRSHMSIHIGHKQFMCQWCGKDFNMKQYFDEHMKTHTGEKPFICEICGKSFTSRPNMKRHRRTHTGEKPYPCDVCGQRFRFSNMLKAHKEKCFRVTSPVNVPPAVQIPLASAPAAPAPAVANTPTSPAPAVSMSPVGAVLPSRPVPHPFSHLHIHTHPHHAHHLPIPPVPHLPPPPALFKSEPLNHRSQSEDTFLRHLAEKNSAAPAQHH</sequence>
<dbReference type="EMBL" id="AK220361">
    <property type="protein sequence ID" value="BAD90422.1"/>
    <property type="molecule type" value="mRNA"/>
</dbReference>
<dbReference type="EMBL" id="AL593858">
    <property type="protein sequence ID" value="CAM15507.1"/>
    <property type="molecule type" value="Genomic_DNA"/>
</dbReference>
<dbReference type="EMBL" id="BC055752">
    <property type="protein sequence ID" value="AAH55752.1"/>
    <property type="molecule type" value="mRNA"/>
</dbReference>
<dbReference type="CCDS" id="CCDS36287.1">
    <molecule id="Q5DU09-1"/>
</dbReference>
<dbReference type="RefSeq" id="NP_963903.2">
    <molecule id="Q5DU09-1"/>
    <property type="nucleotide sequence ID" value="NM_201609.2"/>
</dbReference>
<dbReference type="SMR" id="Q5DU09"/>
<dbReference type="BioGRID" id="234503">
    <property type="interactions" value="30"/>
</dbReference>
<dbReference type="FunCoup" id="Q5DU09">
    <property type="interactions" value="1389"/>
</dbReference>
<dbReference type="STRING" id="10090.ENSMUSP00000103345"/>
<dbReference type="iPTMnet" id="Q5DU09"/>
<dbReference type="PhosphoSitePlus" id="Q5DU09"/>
<dbReference type="jPOST" id="Q5DU09"/>
<dbReference type="PaxDb" id="10090-ENSMUSP00000103345"/>
<dbReference type="ProteomicsDB" id="302136">
    <molecule id="Q5DU09-1"/>
</dbReference>
<dbReference type="ProteomicsDB" id="302137">
    <molecule id="Q5DU09-2"/>
</dbReference>
<dbReference type="Pumba" id="Q5DU09"/>
<dbReference type="Antibodypedia" id="30374">
    <property type="antibodies" value="70 antibodies from 20 providers"/>
</dbReference>
<dbReference type="DNASU" id="268469"/>
<dbReference type="Ensembl" id="ENSMUST00000091565.5">
    <molecule id="Q5DU09-1"/>
    <property type="protein sequence ID" value="ENSMUSP00000089153.5"/>
    <property type="gene ID" value="ENSMUSG00000075595.10"/>
</dbReference>
<dbReference type="Ensembl" id="ENSMUST00000107717.8">
    <molecule id="Q5DU09-1"/>
    <property type="protein sequence ID" value="ENSMUSP00000103345.2"/>
    <property type="gene ID" value="ENSMUSG00000075595.10"/>
</dbReference>
<dbReference type="GeneID" id="268469"/>
<dbReference type="KEGG" id="mmu:268469"/>
<dbReference type="UCSC" id="uc007laq.1">
    <molecule id="Q5DU09-1"/>
    <property type="organism name" value="mouse"/>
</dbReference>
<dbReference type="AGR" id="MGI:2442221"/>
<dbReference type="CTD" id="268469"/>
<dbReference type="MGI" id="MGI:2442221">
    <property type="gene designation" value="Zfp652"/>
</dbReference>
<dbReference type="VEuPathDB" id="HostDB:ENSMUSG00000075595"/>
<dbReference type="eggNOG" id="KOG1721">
    <property type="taxonomic scope" value="Eukaryota"/>
</dbReference>
<dbReference type="GeneTree" id="ENSGT00940000157416"/>
<dbReference type="HOGENOM" id="CLU_002678_74_2_1"/>
<dbReference type="InParanoid" id="Q5DU09"/>
<dbReference type="OMA" id="VESCAVH"/>
<dbReference type="OrthoDB" id="427030at2759"/>
<dbReference type="PhylomeDB" id="Q5DU09"/>
<dbReference type="TreeFam" id="TF332655"/>
<dbReference type="BioGRID-ORCS" id="268469">
    <property type="hits" value="7 hits in 78 CRISPR screens"/>
</dbReference>
<dbReference type="ChiTaRS" id="Zfp652">
    <property type="organism name" value="mouse"/>
</dbReference>
<dbReference type="PRO" id="PR:Q5DU09"/>
<dbReference type="Proteomes" id="UP000000589">
    <property type="component" value="Chromosome 11"/>
</dbReference>
<dbReference type="RNAct" id="Q5DU09">
    <property type="molecule type" value="protein"/>
</dbReference>
<dbReference type="Bgee" id="ENSMUSG00000075595">
    <property type="expression patterns" value="Expressed in hindlimb stylopod muscle and 215 other cell types or tissues"/>
</dbReference>
<dbReference type="ExpressionAtlas" id="Q5DU09">
    <property type="expression patterns" value="baseline and differential"/>
</dbReference>
<dbReference type="GO" id="GO:0005634">
    <property type="term" value="C:nucleus"/>
    <property type="evidence" value="ECO:0007669"/>
    <property type="project" value="UniProtKB-SubCell"/>
</dbReference>
<dbReference type="GO" id="GO:0003677">
    <property type="term" value="F:DNA binding"/>
    <property type="evidence" value="ECO:0007669"/>
    <property type="project" value="UniProtKB-KW"/>
</dbReference>
<dbReference type="GO" id="GO:0008270">
    <property type="term" value="F:zinc ion binding"/>
    <property type="evidence" value="ECO:0007669"/>
    <property type="project" value="UniProtKB-KW"/>
</dbReference>
<dbReference type="FunFam" id="3.30.160.60:FF:000900">
    <property type="entry name" value="Zinc finger and BTB domain containing 47"/>
    <property type="match status" value="1"/>
</dbReference>
<dbReference type="FunFam" id="3.30.160.60:FF:000312">
    <property type="entry name" value="Zinc finger and BTB domain-containing 47"/>
    <property type="match status" value="1"/>
</dbReference>
<dbReference type="FunFam" id="3.30.160.60:FF:000550">
    <property type="entry name" value="Zinc finger and BTB domain-containing 47"/>
    <property type="match status" value="1"/>
</dbReference>
<dbReference type="FunFam" id="3.30.160.60:FF:000166">
    <property type="entry name" value="Zinc finger and BTB domain-containing 49"/>
    <property type="match status" value="1"/>
</dbReference>
<dbReference type="FunFam" id="3.30.160.60:FF:001300">
    <property type="entry name" value="Zinc finger and BTB domain-containing protein 47"/>
    <property type="match status" value="1"/>
</dbReference>
<dbReference type="FunFam" id="3.30.160.60:FF:001378">
    <property type="entry name" value="Zinc finger protein 652"/>
    <property type="match status" value="1"/>
</dbReference>
<dbReference type="FunFam" id="3.30.160.60:FF:000284">
    <property type="entry name" value="Zinc finger protein 652 isoform X1"/>
    <property type="match status" value="1"/>
</dbReference>
<dbReference type="Gene3D" id="3.30.160.60">
    <property type="entry name" value="Classic Zinc Finger"/>
    <property type="match status" value="7"/>
</dbReference>
<dbReference type="InterPro" id="IPR036236">
    <property type="entry name" value="Znf_C2H2_sf"/>
</dbReference>
<dbReference type="InterPro" id="IPR013087">
    <property type="entry name" value="Znf_C2H2_type"/>
</dbReference>
<dbReference type="PANTHER" id="PTHR24393:SF15">
    <property type="entry name" value="IP01243P-RELATED"/>
    <property type="match status" value="1"/>
</dbReference>
<dbReference type="PANTHER" id="PTHR24393">
    <property type="entry name" value="ZINC FINGER PROTEIN"/>
    <property type="match status" value="1"/>
</dbReference>
<dbReference type="Pfam" id="PF00096">
    <property type="entry name" value="zf-C2H2"/>
    <property type="match status" value="6"/>
</dbReference>
<dbReference type="SMART" id="SM00355">
    <property type="entry name" value="ZnF_C2H2"/>
    <property type="match status" value="9"/>
</dbReference>
<dbReference type="SUPFAM" id="SSF57667">
    <property type="entry name" value="beta-beta-alpha zinc fingers"/>
    <property type="match status" value="5"/>
</dbReference>
<dbReference type="PROSITE" id="PS00028">
    <property type="entry name" value="ZINC_FINGER_C2H2_1"/>
    <property type="match status" value="7"/>
</dbReference>
<dbReference type="PROSITE" id="PS50157">
    <property type="entry name" value="ZINC_FINGER_C2H2_2"/>
    <property type="match status" value="9"/>
</dbReference>
<keyword id="KW-0025">Alternative splicing</keyword>
<keyword id="KW-0238">DNA-binding</keyword>
<keyword id="KW-0479">Metal-binding</keyword>
<keyword id="KW-0539">Nucleus</keyword>
<keyword id="KW-0597">Phosphoprotein</keyword>
<keyword id="KW-1185">Reference proteome</keyword>
<keyword id="KW-0677">Repeat</keyword>
<keyword id="KW-0678">Repressor</keyword>
<keyword id="KW-0804">Transcription</keyword>
<keyword id="KW-0805">Transcription regulation</keyword>
<keyword id="KW-0862">Zinc</keyword>
<keyword id="KW-0863">Zinc-finger</keyword>
<evidence type="ECO:0000250" key="1"/>
<evidence type="ECO:0000250" key="2">
    <source>
        <dbReference type="UniProtKB" id="A1L1J6"/>
    </source>
</evidence>
<evidence type="ECO:0000250" key="3">
    <source>
        <dbReference type="UniProtKB" id="Q9Y2D9"/>
    </source>
</evidence>
<evidence type="ECO:0000255" key="4">
    <source>
        <dbReference type="PROSITE-ProRule" id="PRU00042"/>
    </source>
</evidence>
<evidence type="ECO:0000256" key="5">
    <source>
        <dbReference type="SAM" id="MobiDB-lite"/>
    </source>
</evidence>
<evidence type="ECO:0000303" key="6">
    <source>
    </source>
</evidence>
<evidence type="ECO:0000305" key="7"/>
<name>ZN652_MOUSE</name>
<comment type="function">
    <text evidence="1">Functions as a transcriptional repressor.</text>
</comment>
<comment type="subunit">
    <text evidence="1">Interacts with CBFA2T3.</text>
</comment>
<comment type="subcellular location">
    <subcellularLocation>
        <location evidence="7">Nucleus</location>
    </subcellularLocation>
</comment>
<comment type="alternative products">
    <event type="alternative splicing"/>
    <isoform>
        <id>Q5DU09-1</id>
        <name>1</name>
        <sequence type="displayed"/>
    </isoform>
    <isoform>
        <id>Q5DU09-2</id>
        <name>2</name>
        <sequence type="described" ref="VSP_023669 VSP_023670"/>
    </isoform>
</comment>
<comment type="similarity">
    <text evidence="7">Belongs to the krueppel C2H2-type zinc-finger protein family.</text>
</comment>
<feature type="chain" id="PRO_0000280429" description="Zinc finger protein 652">
    <location>
        <begin position="1"/>
        <end position="608"/>
    </location>
</feature>
<feature type="zinc finger region" description="C2H2-type 1" evidence="4">
    <location>
        <begin position="244"/>
        <end position="267"/>
    </location>
</feature>
<feature type="zinc finger region" description="C2H2-type 2; degenerate" evidence="4">
    <location>
        <begin position="271"/>
        <end position="293"/>
    </location>
</feature>
<feature type="zinc finger region" description="C2H2-type 3" evidence="4">
    <location>
        <begin position="298"/>
        <end position="321"/>
    </location>
</feature>
<feature type="zinc finger region" description="C2H2-type 4" evidence="4">
    <location>
        <begin position="328"/>
        <end position="350"/>
    </location>
</feature>
<feature type="zinc finger region" description="C2H2-type 5" evidence="4">
    <location>
        <begin position="356"/>
        <end position="378"/>
    </location>
</feature>
<feature type="zinc finger region" description="C2H2-type 6" evidence="4">
    <location>
        <begin position="384"/>
        <end position="406"/>
    </location>
</feature>
<feature type="zinc finger region" description="C2H2-type 7" evidence="4">
    <location>
        <begin position="412"/>
        <end position="434"/>
    </location>
</feature>
<feature type="zinc finger region" description="C2H2-type 8" evidence="4">
    <location>
        <begin position="440"/>
        <end position="462"/>
    </location>
</feature>
<feature type="zinc finger region" description="C2H2-type 9; degenerate" evidence="4">
    <location>
        <begin position="468"/>
        <end position="491"/>
    </location>
</feature>
<feature type="region of interest" description="Disordered" evidence="5">
    <location>
        <begin position="61"/>
        <end position="232"/>
    </location>
</feature>
<feature type="region of interest" description="Mediates interaction with CBFA2T3" evidence="1">
    <location>
        <begin position="497"/>
        <end position="608"/>
    </location>
</feature>
<feature type="compositionally biased region" description="Basic and acidic residues" evidence="5">
    <location>
        <begin position="71"/>
        <end position="97"/>
    </location>
</feature>
<feature type="compositionally biased region" description="Acidic residues" evidence="5">
    <location>
        <begin position="98"/>
        <end position="108"/>
    </location>
</feature>
<feature type="compositionally biased region" description="Acidic residues" evidence="5">
    <location>
        <begin position="151"/>
        <end position="162"/>
    </location>
</feature>
<feature type="compositionally biased region" description="Low complexity" evidence="5">
    <location>
        <begin position="194"/>
        <end position="208"/>
    </location>
</feature>
<feature type="modified residue" description="Phosphoserine" evidence="3">
    <location>
        <position position="57"/>
    </location>
</feature>
<feature type="modified residue" description="Phosphoserine" evidence="2">
    <location>
        <position position="100"/>
    </location>
</feature>
<feature type="modified residue" description="Phosphothreonine" evidence="2">
    <location>
        <position position="103"/>
    </location>
</feature>
<feature type="modified residue" description="Phosphoserine" evidence="3">
    <location>
        <position position="196"/>
    </location>
</feature>
<feature type="modified residue" description="Phosphoserine" evidence="3">
    <location>
        <position position="203"/>
    </location>
</feature>
<feature type="splice variant" id="VSP_023669" description="In isoform 2." evidence="6">
    <original>CVSCNKSFKKLWSLHEHIKIVHGYAEKKFACEICEKKFYTMAHVRKHMVAH</original>
    <variation>VGLTSGGQSFQARTWLFRVIWCLPKRIEAEGTDFTNYHFRLCCLGLFKTKA</variation>
    <location>
        <begin position="300"/>
        <end position="350"/>
    </location>
</feature>
<feature type="splice variant" id="VSP_023670" description="In isoform 2." evidence="6">
    <location>
        <begin position="351"/>
        <end position="608"/>
    </location>
</feature>
<reference key="1">
    <citation type="submission" date="2005-02" db="EMBL/GenBank/DDBJ databases">
        <title>Prediction of the coding sequences of mouse homologues of KIAA gene. The complete nucleotide sequences of mouse KIAA-homologous cDNAs identified by screening of terminal sequences of cDNA clones randomly sampled from size-fractionated libraries.</title>
        <authorList>
            <person name="Okazaki N."/>
            <person name="Kikuno R.F."/>
            <person name="Ohara R."/>
            <person name="Inamoto S."/>
            <person name="Nagase T."/>
            <person name="Ohara O."/>
            <person name="Koga H."/>
        </authorList>
    </citation>
    <scope>NUCLEOTIDE SEQUENCE [LARGE SCALE MRNA] (ISOFORM 1)</scope>
    <source>
        <tissue>Fetal brain</tissue>
    </source>
</reference>
<reference key="2">
    <citation type="journal article" date="2009" name="PLoS Biol.">
        <title>Lineage-specific biology revealed by a finished genome assembly of the mouse.</title>
        <authorList>
            <person name="Church D.M."/>
            <person name="Goodstadt L."/>
            <person name="Hillier L.W."/>
            <person name="Zody M.C."/>
            <person name="Goldstein S."/>
            <person name="She X."/>
            <person name="Bult C.J."/>
            <person name="Agarwala R."/>
            <person name="Cherry J.L."/>
            <person name="DiCuccio M."/>
            <person name="Hlavina W."/>
            <person name="Kapustin Y."/>
            <person name="Meric P."/>
            <person name="Maglott D."/>
            <person name="Birtle Z."/>
            <person name="Marques A.C."/>
            <person name="Graves T."/>
            <person name="Zhou S."/>
            <person name="Teague B."/>
            <person name="Potamousis K."/>
            <person name="Churas C."/>
            <person name="Place M."/>
            <person name="Herschleb J."/>
            <person name="Runnheim R."/>
            <person name="Forrest D."/>
            <person name="Amos-Landgraf J."/>
            <person name="Schwartz D.C."/>
            <person name="Cheng Z."/>
            <person name="Lindblad-Toh K."/>
            <person name="Eichler E.E."/>
            <person name="Ponting C.P."/>
        </authorList>
    </citation>
    <scope>NUCLEOTIDE SEQUENCE [LARGE SCALE GENOMIC DNA]</scope>
    <source>
        <strain>C57BL/6J</strain>
    </source>
</reference>
<reference key="3">
    <citation type="journal article" date="2004" name="Genome Res.">
        <title>The status, quality, and expansion of the NIH full-length cDNA project: the Mammalian Gene Collection (MGC).</title>
        <authorList>
            <consortium name="The MGC Project Team"/>
        </authorList>
    </citation>
    <scope>NUCLEOTIDE SEQUENCE [LARGE SCALE MRNA] (ISOFORM 2)</scope>
    <source>
        <strain>C57BL/6J</strain>
        <tissue>Brain</tissue>
    </source>
</reference>
<reference key="4">
    <citation type="journal article" date="2007" name="Proc. Natl. Acad. Sci. U.S.A.">
        <title>Large-scale phosphorylation analysis of mouse liver.</title>
        <authorList>
            <person name="Villen J."/>
            <person name="Beausoleil S.A."/>
            <person name="Gerber S.A."/>
            <person name="Gygi S.P."/>
        </authorList>
    </citation>
    <scope>IDENTIFICATION BY MASS SPECTROMETRY [LARGE SCALE ANALYSIS]</scope>
    <source>
        <tissue>Liver</tissue>
    </source>
</reference>
<reference key="5">
    <citation type="journal article" date="2010" name="Cell">
        <title>A tissue-specific atlas of mouse protein phosphorylation and expression.</title>
        <authorList>
            <person name="Huttlin E.L."/>
            <person name="Jedrychowski M.P."/>
            <person name="Elias J.E."/>
            <person name="Goswami T."/>
            <person name="Rad R."/>
            <person name="Beausoleil S.A."/>
            <person name="Villen J."/>
            <person name="Haas W."/>
            <person name="Sowa M.E."/>
            <person name="Gygi S.P."/>
        </authorList>
    </citation>
    <scope>IDENTIFICATION BY MASS SPECTROMETRY [LARGE SCALE ANALYSIS]</scope>
    <source>
        <tissue>Brown adipose tissue</tissue>
        <tissue>Kidney</tissue>
    </source>
</reference>
<gene>
    <name type="primary">Znf652</name>
    <name type="synonym">Kiaa0924</name>
    <name type="synonym">Zfp652</name>
</gene>